<feature type="chain" id="PRO_1000002721" description="Crossover junction endodeoxyribonuclease RuvC">
    <location>
        <begin position="1"/>
        <end position="193"/>
    </location>
</feature>
<feature type="active site" evidence="1">
    <location>
        <position position="7"/>
    </location>
</feature>
<feature type="active site" evidence="1">
    <location>
        <position position="68"/>
    </location>
</feature>
<feature type="active site" evidence="1">
    <location>
        <position position="141"/>
    </location>
</feature>
<feature type="binding site" evidence="1">
    <location>
        <position position="7"/>
    </location>
    <ligand>
        <name>Mg(2+)</name>
        <dbReference type="ChEBI" id="CHEBI:18420"/>
        <label>1</label>
    </ligand>
</feature>
<feature type="binding site" evidence="1">
    <location>
        <position position="68"/>
    </location>
    <ligand>
        <name>Mg(2+)</name>
        <dbReference type="ChEBI" id="CHEBI:18420"/>
        <label>2</label>
    </ligand>
</feature>
<feature type="binding site" evidence="1">
    <location>
        <position position="141"/>
    </location>
    <ligand>
        <name>Mg(2+)</name>
        <dbReference type="ChEBI" id="CHEBI:18420"/>
        <label>1</label>
    </ligand>
</feature>
<sequence length="193" mass="20660">MIILGVDPGLTRCGVGVIEAGAYRRLSFIHVDVVRSDPKTSQDLRLLAIYNGLVEKIERFAPDAVSIERVFAQENRNTVLGTAQAAGLAMLAAAQRGIPVALHTPTESKLAITGNGKAEKIQMERMVARILGLNTLPKPADAADALAIAICHALRPAGALQGGEREQHLTAAQRQWAQASQKAARRQGVRRGM</sequence>
<evidence type="ECO:0000255" key="1">
    <source>
        <dbReference type="HAMAP-Rule" id="MF_00034"/>
    </source>
</evidence>
<dbReference type="EC" id="3.1.21.10" evidence="1"/>
<dbReference type="EMBL" id="AP009256">
    <property type="protein sequence ID" value="BAF39584.1"/>
    <property type="molecule type" value="Genomic_DNA"/>
</dbReference>
<dbReference type="RefSeq" id="WP_003809282.1">
    <property type="nucleotide sequence ID" value="NZ_CAXVKE010000001.1"/>
</dbReference>
<dbReference type="SMR" id="A1A1K1"/>
<dbReference type="STRING" id="367928.BAD_0803"/>
<dbReference type="PaxDb" id="1680-BADO_0852"/>
<dbReference type="GeneID" id="4556703"/>
<dbReference type="KEGG" id="bad:BAD_0803"/>
<dbReference type="HOGENOM" id="CLU_091257_0_2_11"/>
<dbReference type="Proteomes" id="UP000008702">
    <property type="component" value="Chromosome"/>
</dbReference>
<dbReference type="GO" id="GO:0005737">
    <property type="term" value="C:cytoplasm"/>
    <property type="evidence" value="ECO:0007669"/>
    <property type="project" value="UniProtKB-SubCell"/>
</dbReference>
<dbReference type="GO" id="GO:0048476">
    <property type="term" value="C:Holliday junction resolvase complex"/>
    <property type="evidence" value="ECO:0007669"/>
    <property type="project" value="UniProtKB-UniRule"/>
</dbReference>
<dbReference type="GO" id="GO:0008821">
    <property type="term" value="F:crossover junction DNA endonuclease activity"/>
    <property type="evidence" value="ECO:0007669"/>
    <property type="project" value="UniProtKB-UniRule"/>
</dbReference>
<dbReference type="GO" id="GO:0003677">
    <property type="term" value="F:DNA binding"/>
    <property type="evidence" value="ECO:0007669"/>
    <property type="project" value="UniProtKB-KW"/>
</dbReference>
<dbReference type="GO" id="GO:0000287">
    <property type="term" value="F:magnesium ion binding"/>
    <property type="evidence" value="ECO:0007669"/>
    <property type="project" value="UniProtKB-UniRule"/>
</dbReference>
<dbReference type="GO" id="GO:0006310">
    <property type="term" value="P:DNA recombination"/>
    <property type="evidence" value="ECO:0007669"/>
    <property type="project" value="UniProtKB-UniRule"/>
</dbReference>
<dbReference type="GO" id="GO:0006281">
    <property type="term" value="P:DNA repair"/>
    <property type="evidence" value="ECO:0007669"/>
    <property type="project" value="UniProtKB-UniRule"/>
</dbReference>
<dbReference type="FunFam" id="3.30.420.10:FF:000002">
    <property type="entry name" value="Crossover junction endodeoxyribonuclease RuvC"/>
    <property type="match status" value="1"/>
</dbReference>
<dbReference type="Gene3D" id="3.30.420.10">
    <property type="entry name" value="Ribonuclease H-like superfamily/Ribonuclease H"/>
    <property type="match status" value="1"/>
</dbReference>
<dbReference type="HAMAP" id="MF_00034">
    <property type="entry name" value="RuvC"/>
    <property type="match status" value="1"/>
</dbReference>
<dbReference type="InterPro" id="IPR012337">
    <property type="entry name" value="RNaseH-like_sf"/>
</dbReference>
<dbReference type="InterPro" id="IPR036397">
    <property type="entry name" value="RNaseH_sf"/>
</dbReference>
<dbReference type="InterPro" id="IPR020563">
    <property type="entry name" value="X-over_junc_endoDNase_Mg_BS"/>
</dbReference>
<dbReference type="InterPro" id="IPR002176">
    <property type="entry name" value="X-over_junc_endoDNase_RuvC"/>
</dbReference>
<dbReference type="NCBIfam" id="TIGR00228">
    <property type="entry name" value="ruvC"/>
    <property type="match status" value="1"/>
</dbReference>
<dbReference type="PANTHER" id="PTHR30194">
    <property type="entry name" value="CROSSOVER JUNCTION ENDODEOXYRIBONUCLEASE RUVC"/>
    <property type="match status" value="1"/>
</dbReference>
<dbReference type="PANTHER" id="PTHR30194:SF3">
    <property type="entry name" value="CROSSOVER JUNCTION ENDODEOXYRIBONUCLEASE RUVC"/>
    <property type="match status" value="1"/>
</dbReference>
<dbReference type="Pfam" id="PF02075">
    <property type="entry name" value="RuvC"/>
    <property type="match status" value="1"/>
</dbReference>
<dbReference type="PRINTS" id="PR00696">
    <property type="entry name" value="RSOLVASERUVC"/>
</dbReference>
<dbReference type="SUPFAM" id="SSF53098">
    <property type="entry name" value="Ribonuclease H-like"/>
    <property type="match status" value="1"/>
</dbReference>
<dbReference type="PROSITE" id="PS01321">
    <property type="entry name" value="RUVC"/>
    <property type="match status" value="1"/>
</dbReference>
<gene>
    <name evidence="1" type="primary">ruvC</name>
    <name type="ordered locus">BAD_0803</name>
</gene>
<reference key="1">
    <citation type="submission" date="2006-12" db="EMBL/GenBank/DDBJ databases">
        <title>Bifidobacterium adolescentis complete genome sequence.</title>
        <authorList>
            <person name="Suzuki T."/>
            <person name="Tsuda Y."/>
            <person name="Kanou N."/>
            <person name="Inoue T."/>
            <person name="Kumazaki K."/>
            <person name="Nagano S."/>
            <person name="Hirai S."/>
            <person name="Tanaka K."/>
            <person name="Watanabe K."/>
        </authorList>
    </citation>
    <scope>NUCLEOTIDE SEQUENCE [LARGE SCALE GENOMIC DNA]</scope>
    <source>
        <strain>ATCC 15703 / DSM 20083 / NCTC 11814 / E194a</strain>
    </source>
</reference>
<comment type="function">
    <text evidence="1">The RuvA-RuvB-RuvC complex processes Holliday junction (HJ) DNA during genetic recombination and DNA repair. Endonuclease that resolves HJ intermediates. Cleaves cruciform DNA by making single-stranded nicks across the HJ at symmetrical positions within the homologous arms, yielding a 5'-phosphate and a 3'-hydroxyl group; requires a central core of homology in the junction. The consensus cleavage sequence is 5'-(A/T)TT(C/G)-3'. Cleavage occurs on the 3'-side of the TT dinucleotide at the point of strand exchange. HJ branch migration catalyzed by RuvA-RuvB allows RuvC to scan DNA until it finds its consensus sequence, where it cleaves and resolves the cruciform DNA.</text>
</comment>
<comment type="catalytic activity">
    <reaction evidence="1">
        <text>Endonucleolytic cleavage at a junction such as a reciprocal single-stranded crossover between two homologous DNA duplexes (Holliday junction).</text>
        <dbReference type="EC" id="3.1.21.10"/>
    </reaction>
</comment>
<comment type="cofactor">
    <cofactor evidence="1">
        <name>Mg(2+)</name>
        <dbReference type="ChEBI" id="CHEBI:18420"/>
    </cofactor>
    <text evidence="1">Binds 2 Mg(2+) ion per subunit.</text>
</comment>
<comment type="subunit">
    <text evidence="1">Homodimer which binds Holliday junction (HJ) DNA. The HJ becomes 2-fold symmetrical on binding to RuvC with unstacked arms; it has a different conformation from HJ DNA in complex with RuvA. In the full resolvosome a probable DNA-RuvA(4)-RuvB(12)-RuvC(2) complex forms which resolves the HJ.</text>
</comment>
<comment type="subcellular location">
    <subcellularLocation>
        <location evidence="1">Cytoplasm</location>
    </subcellularLocation>
</comment>
<comment type="similarity">
    <text evidence="1">Belongs to the RuvC family.</text>
</comment>
<protein>
    <recommendedName>
        <fullName evidence="1">Crossover junction endodeoxyribonuclease RuvC</fullName>
        <ecNumber evidence="1">3.1.21.10</ecNumber>
    </recommendedName>
    <alternativeName>
        <fullName evidence="1">Holliday junction nuclease RuvC</fullName>
    </alternativeName>
    <alternativeName>
        <fullName evidence="1">Holliday junction resolvase RuvC</fullName>
    </alternativeName>
</protein>
<accession>A1A1K1</accession>
<keyword id="KW-0963">Cytoplasm</keyword>
<keyword id="KW-0227">DNA damage</keyword>
<keyword id="KW-0233">DNA recombination</keyword>
<keyword id="KW-0234">DNA repair</keyword>
<keyword id="KW-0238">DNA-binding</keyword>
<keyword id="KW-0255">Endonuclease</keyword>
<keyword id="KW-0378">Hydrolase</keyword>
<keyword id="KW-0460">Magnesium</keyword>
<keyword id="KW-0479">Metal-binding</keyword>
<keyword id="KW-0540">Nuclease</keyword>
<keyword id="KW-1185">Reference proteome</keyword>
<name>RUVC_BIFAA</name>
<organism>
    <name type="scientific">Bifidobacterium adolescentis (strain ATCC 15703 / DSM 20083 / NCTC 11814 / E194a)</name>
    <dbReference type="NCBI Taxonomy" id="367928"/>
    <lineage>
        <taxon>Bacteria</taxon>
        <taxon>Bacillati</taxon>
        <taxon>Actinomycetota</taxon>
        <taxon>Actinomycetes</taxon>
        <taxon>Bifidobacteriales</taxon>
        <taxon>Bifidobacteriaceae</taxon>
        <taxon>Bifidobacterium</taxon>
    </lineage>
</organism>
<proteinExistence type="inferred from homology"/>